<proteinExistence type="inferred from homology"/>
<protein>
    <recommendedName>
        <fullName evidence="1">Large ribosomal subunit protein bL28</fullName>
    </recommendedName>
    <alternativeName>
        <fullName evidence="3">50S ribosomal protein L28</fullName>
    </alternativeName>
</protein>
<comment type="similarity">
    <text evidence="1">Belongs to the bacterial ribosomal protein bL28 family.</text>
</comment>
<gene>
    <name evidence="1" type="primary">rpmB</name>
    <name type="ordered locus">Mlg_2641</name>
</gene>
<keyword id="KW-1185">Reference proteome</keyword>
<keyword id="KW-0687">Ribonucleoprotein</keyword>
<keyword id="KW-0689">Ribosomal protein</keyword>
<sequence>MSKVCQVTGKRPTTGNNVSHANNKTKRRFLPNLHHHRFWVESEQRFVRLRVSSKGMRIIDRKGIDQVLSDLRARGEKV</sequence>
<reference key="1">
    <citation type="submission" date="2006-08" db="EMBL/GenBank/DDBJ databases">
        <title>Complete sequence of Alkalilimnicola ehrilichei MLHE-1.</title>
        <authorList>
            <person name="Copeland A."/>
            <person name="Lucas S."/>
            <person name="Lapidus A."/>
            <person name="Barry K."/>
            <person name="Detter J.C."/>
            <person name="Glavina del Rio T."/>
            <person name="Hammon N."/>
            <person name="Israni S."/>
            <person name="Dalin E."/>
            <person name="Tice H."/>
            <person name="Pitluck S."/>
            <person name="Sims D."/>
            <person name="Brettin T."/>
            <person name="Bruce D."/>
            <person name="Han C."/>
            <person name="Tapia R."/>
            <person name="Gilna P."/>
            <person name="Schmutz J."/>
            <person name="Larimer F."/>
            <person name="Land M."/>
            <person name="Hauser L."/>
            <person name="Kyrpides N."/>
            <person name="Mikhailova N."/>
            <person name="Oremland R.S."/>
            <person name="Hoeft S.E."/>
            <person name="Switzer-Blum J."/>
            <person name="Kulp T."/>
            <person name="King G."/>
            <person name="Tabita R."/>
            <person name="Witte B."/>
            <person name="Santini J.M."/>
            <person name="Basu P."/>
            <person name="Hollibaugh J.T."/>
            <person name="Xie G."/>
            <person name="Stolz J.F."/>
            <person name="Richardson P."/>
        </authorList>
    </citation>
    <scope>NUCLEOTIDE SEQUENCE [LARGE SCALE GENOMIC DNA]</scope>
    <source>
        <strain>ATCC BAA-1101 / DSM 17681 / MLHE-1</strain>
    </source>
</reference>
<evidence type="ECO:0000255" key="1">
    <source>
        <dbReference type="HAMAP-Rule" id="MF_00373"/>
    </source>
</evidence>
<evidence type="ECO:0000256" key="2">
    <source>
        <dbReference type="SAM" id="MobiDB-lite"/>
    </source>
</evidence>
<evidence type="ECO:0000305" key="3"/>
<dbReference type="EMBL" id="CP000453">
    <property type="protein sequence ID" value="ABI57981.1"/>
    <property type="molecule type" value="Genomic_DNA"/>
</dbReference>
<dbReference type="RefSeq" id="WP_011630374.1">
    <property type="nucleotide sequence ID" value="NC_008340.1"/>
</dbReference>
<dbReference type="SMR" id="Q0A5A6"/>
<dbReference type="KEGG" id="aeh:Mlg_2641"/>
<dbReference type="eggNOG" id="COG0227">
    <property type="taxonomic scope" value="Bacteria"/>
</dbReference>
<dbReference type="HOGENOM" id="CLU_064548_3_1_6"/>
<dbReference type="OrthoDB" id="9805609at2"/>
<dbReference type="Proteomes" id="UP000001962">
    <property type="component" value="Chromosome"/>
</dbReference>
<dbReference type="GO" id="GO:0022625">
    <property type="term" value="C:cytosolic large ribosomal subunit"/>
    <property type="evidence" value="ECO:0007669"/>
    <property type="project" value="TreeGrafter"/>
</dbReference>
<dbReference type="GO" id="GO:0003735">
    <property type="term" value="F:structural constituent of ribosome"/>
    <property type="evidence" value="ECO:0007669"/>
    <property type="project" value="InterPro"/>
</dbReference>
<dbReference type="GO" id="GO:0006412">
    <property type="term" value="P:translation"/>
    <property type="evidence" value="ECO:0007669"/>
    <property type="project" value="UniProtKB-UniRule"/>
</dbReference>
<dbReference type="FunFam" id="2.30.170.40:FF:000001">
    <property type="entry name" value="50S ribosomal protein L28"/>
    <property type="match status" value="1"/>
</dbReference>
<dbReference type="Gene3D" id="2.30.170.40">
    <property type="entry name" value="Ribosomal protein L28/L24"/>
    <property type="match status" value="1"/>
</dbReference>
<dbReference type="HAMAP" id="MF_00373">
    <property type="entry name" value="Ribosomal_bL28"/>
    <property type="match status" value="1"/>
</dbReference>
<dbReference type="InterPro" id="IPR026569">
    <property type="entry name" value="Ribosomal_bL28"/>
</dbReference>
<dbReference type="InterPro" id="IPR034704">
    <property type="entry name" value="Ribosomal_bL28/bL31-like_sf"/>
</dbReference>
<dbReference type="InterPro" id="IPR001383">
    <property type="entry name" value="Ribosomal_bL28_bact-type"/>
</dbReference>
<dbReference type="InterPro" id="IPR037147">
    <property type="entry name" value="Ribosomal_bL28_sf"/>
</dbReference>
<dbReference type="NCBIfam" id="TIGR00009">
    <property type="entry name" value="L28"/>
    <property type="match status" value="1"/>
</dbReference>
<dbReference type="PANTHER" id="PTHR13528">
    <property type="entry name" value="39S RIBOSOMAL PROTEIN L28, MITOCHONDRIAL"/>
    <property type="match status" value="1"/>
</dbReference>
<dbReference type="PANTHER" id="PTHR13528:SF2">
    <property type="entry name" value="LARGE RIBOSOMAL SUBUNIT PROTEIN BL28M"/>
    <property type="match status" value="1"/>
</dbReference>
<dbReference type="Pfam" id="PF00830">
    <property type="entry name" value="Ribosomal_L28"/>
    <property type="match status" value="1"/>
</dbReference>
<dbReference type="SUPFAM" id="SSF143800">
    <property type="entry name" value="L28p-like"/>
    <property type="match status" value="1"/>
</dbReference>
<organism>
    <name type="scientific">Alkalilimnicola ehrlichii (strain ATCC BAA-1101 / DSM 17681 / MLHE-1)</name>
    <dbReference type="NCBI Taxonomy" id="187272"/>
    <lineage>
        <taxon>Bacteria</taxon>
        <taxon>Pseudomonadati</taxon>
        <taxon>Pseudomonadota</taxon>
        <taxon>Gammaproteobacteria</taxon>
        <taxon>Chromatiales</taxon>
        <taxon>Ectothiorhodospiraceae</taxon>
        <taxon>Alkalilimnicola</taxon>
    </lineage>
</organism>
<name>RL28_ALKEH</name>
<feature type="chain" id="PRO_1000007162" description="Large ribosomal subunit protein bL28">
    <location>
        <begin position="1"/>
        <end position="78"/>
    </location>
</feature>
<feature type="region of interest" description="Disordered" evidence="2">
    <location>
        <begin position="1"/>
        <end position="22"/>
    </location>
</feature>
<feature type="compositionally biased region" description="Polar residues" evidence="2">
    <location>
        <begin position="11"/>
        <end position="22"/>
    </location>
</feature>
<accession>Q0A5A6</accession>